<name>RS3_MANSM</name>
<organism>
    <name type="scientific">Mannheimia succiniciproducens (strain KCTC 0769BP / MBEL55E)</name>
    <dbReference type="NCBI Taxonomy" id="221988"/>
    <lineage>
        <taxon>Bacteria</taxon>
        <taxon>Pseudomonadati</taxon>
        <taxon>Pseudomonadota</taxon>
        <taxon>Gammaproteobacteria</taxon>
        <taxon>Pasteurellales</taxon>
        <taxon>Pasteurellaceae</taxon>
        <taxon>Basfia</taxon>
    </lineage>
</organism>
<comment type="function">
    <text evidence="1">Binds the lower part of the 30S subunit head. Binds mRNA in the 70S ribosome, positioning it for translation.</text>
</comment>
<comment type="subunit">
    <text evidence="1">Part of the 30S ribosomal subunit. Forms a tight complex with proteins S10 and S14.</text>
</comment>
<comment type="similarity">
    <text evidence="1">Belongs to the universal ribosomal protein uS3 family.</text>
</comment>
<comment type="sequence caution" evidence="2">
    <conflict type="erroneous initiation">
        <sequence resource="EMBL-CDS" id="AAU38649"/>
    </conflict>
</comment>
<sequence>MGQKVNPHGIRLGIVKPWSSTWFANTQDFASNLDGDFKVRKFLNKELANASVSRITIERPAKSIRVTIHTARPGIVIGKKGEDVEKLRNAVAKIAGVPAQINIAEVKKPELDAKLVADSIASQLERRVMFRRAMKRAVQNAMRLGAKGIKVEVSGRLGGAEIARSEWYREGRVPLHTLRADIDYNTSEAHTTYGVIGVKVWIFKGEILGGMAAIAQQPEQQPAAPKKAPRGKGRK</sequence>
<feature type="chain" id="PRO_0000130145" description="Small ribosomal subunit protein uS3">
    <location>
        <begin position="1"/>
        <end position="235"/>
    </location>
</feature>
<feature type="domain" description="KH type-2" evidence="1">
    <location>
        <begin position="39"/>
        <end position="107"/>
    </location>
</feature>
<evidence type="ECO:0000255" key="1">
    <source>
        <dbReference type="HAMAP-Rule" id="MF_01309"/>
    </source>
</evidence>
<evidence type="ECO:0000305" key="2"/>
<gene>
    <name evidence="1" type="primary">rpsC</name>
    <name type="ordered locus">MS2042</name>
</gene>
<accession>Q65QW1</accession>
<proteinExistence type="inferred from homology"/>
<reference key="1">
    <citation type="journal article" date="2004" name="Nat. Biotechnol.">
        <title>The genome sequence of the capnophilic rumen bacterium Mannheimia succiniciproducens.</title>
        <authorList>
            <person name="Hong S.H."/>
            <person name="Kim J.S."/>
            <person name="Lee S.Y."/>
            <person name="In Y.H."/>
            <person name="Choi S.S."/>
            <person name="Rih J.-K."/>
            <person name="Kim C.H."/>
            <person name="Jeong H."/>
            <person name="Hur C.G."/>
            <person name="Kim J.J."/>
        </authorList>
    </citation>
    <scope>NUCLEOTIDE SEQUENCE [LARGE SCALE GENOMIC DNA]</scope>
    <source>
        <strain>KCTC 0769BP / MBEL55E</strain>
    </source>
</reference>
<keyword id="KW-0687">Ribonucleoprotein</keyword>
<keyword id="KW-0689">Ribosomal protein</keyword>
<keyword id="KW-0694">RNA-binding</keyword>
<keyword id="KW-0699">rRNA-binding</keyword>
<dbReference type="EMBL" id="AE016827">
    <property type="protein sequence ID" value="AAU38649.1"/>
    <property type="status" value="ALT_INIT"/>
    <property type="molecule type" value="Genomic_DNA"/>
</dbReference>
<dbReference type="RefSeq" id="WP_011201199.1">
    <property type="nucleotide sequence ID" value="NC_006300.1"/>
</dbReference>
<dbReference type="SMR" id="Q65QW1"/>
<dbReference type="STRING" id="221988.MS2042"/>
<dbReference type="KEGG" id="msu:MS2042"/>
<dbReference type="eggNOG" id="COG0092">
    <property type="taxonomic scope" value="Bacteria"/>
</dbReference>
<dbReference type="HOGENOM" id="CLU_058591_0_2_6"/>
<dbReference type="OrthoDB" id="9806396at2"/>
<dbReference type="Proteomes" id="UP000000607">
    <property type="component" value="Chromosome"/>
</dbReference>
<dbReference type="GO" id="GO:0022627">
    <property type="term" value="C:cytosolic small ribosomal subunit"/>
    <property type="evidence" value="ECO:0007669"/>
    <property type="project" value="TreeGrafter"/>
</dbReference>
<dbReference type="GO" id="GO:0003729">
    <property type="term" value="F:mRNA binding"/>
    <property type="evidence" value="ECO:0007669"/>
    <property type="project" value="UniProtKB-UniRule"/>
</dbReference>
<dbReference type="GO" id="GO:0019843">
    <property type="term" value="F:rRNA binding"/>
    <property type="evidence" value="ECO:0007669"/>
    <property type="project" value="UniProtKB-UniRule"/>
</dbReference>
<dbReference type="GO" id="GO:0003735">
    <property type="term" value="F:structural constituent of ribosome"/>
    <property type="evidence" value="ECO:0007669"/>
    <property type="project" value="InterPro"/>
</dbReference>
<dbReference type="GO" id="GO:0006412">
    <property type="term" value="P:translation"/>
    <property type="evidence" value="ECO:0007669"/>
    <property type="project" value="UniProtKB-UniRule"/>
</dbReference>
<dbReference type="CDD" id="cd02412">
    <property type="entry name" value="KH-II_30S_S3"/>
    <property type="match status" value="1"/>
</dbReference>
<dbReference type="FunFam" id="3.30.1140.32:FF:000001">
    <property type="entry name" value="30S ribosomal protein S3"/>
    <property type="match status" value="1"/>
</dbReference>
<dbReference type="FunFam" id="3.30.300.20:FF:000001">
    <property type="entry name" value="30S ribosomal protein S3"/>
    <property type="match status" value="1"/>
</dbReference>
<dbReference type="Gene3D" id="3.30.300.20">
    <property type="match status" value="1"/>
</dbReference>
<dbReference type="Gene3D" id="3.30.1140.32">
    <property type="entry name" value="Ribosomal protein S3, C-terminal domain"/>
    <property type="match status" value="1"/>
</dbReference>
<dbReference type="HAMAP" id="MF_01309_B">
    <property type="entry name" value="Ribosomal_uS3_B"/>
    <property type="match status" value="1"/>
</dbReference>
<dbReference type="InterPro" id="IPR004087">
    <property type="entry name" value="KH_dom"/>
</dbReference>
<dbReference type="InterPro" id="IPR015946">
    <property type="entry name" value="KH_dom-like_a/b"/>
</dbReference>
<dbReference type="InterPro" id="IPR004044">
    <property type="entry name" value="KH_dom_type_2"/>
</dbReference>
<dbReference type="InterPro" id="IPR009019">
    <property type="entry name" value="KH_sf_prok-type"/>
</dbReference>
<dbReference type="InterPro" id="IPR036419">
    <property type="entry name" value="Ribosomal_S3_C_sf"/>
</dbReference>
<dbReference type="InterPro" id="IPR005704">
    <property type="entry name" value="Ribosomal_uS3_bac-typ"/>
</dbReference>
<dbReference type="InterPro" id="IPR001351">
    <property type="entry name" value="Ribosomal_uS3_C"/>
</dbReference>
<dbReference type="InterPro" id="IPR018280">
    <property type="entry name" value="Ribosomal_uS3_CS"/>
</dbReference>
<dbReference type="NCBIfam" id="TIGR01009">
    <property type="entry name" value="rpsC_bact"/>
    <property type="match status" value="1"/>
</dbReference>
<dbReference type="PANTHER" id="PTHR11760">
    <property type="entry name" value="30S/40S RIBOSOMAL PROTEIN S3"/>
    <property type="match status" value="1"/>
</dbReference>
<dbReference type="PANTHER" id="PTHR11760:SF19">
    <property type="entry name" value="SMALL RIBOSOMAL SUBUNIT PROTEIN US3C"/>
    <property type="match status" value="1"/>
</dbReference>
<dbReference type="Pfam" id="PF07650">
    <property type="entry name" value="KH_2"/>
    <property type="match status" value="1"/>
</dbReference>
<dbReference type="Pfam" id="PF00189">
    <property type="entry name" value="Ribosomal_S3_C"/>
    <property type="match status" value="1"/>
</dbReference>
<dbReference type="SMART" id="SM00322">
    <property type="entry name" value="KH"/>
    <property type="match status" value="1"/>
</dbReference>
<dbReference type="SUPFAM" id="SSF54814">
    <property type="entry name" value="Prokaryotic type KH domain (KH-domain type II)"/>
    <property type="match status" value="1"/>
</dbReference>
<dbReference type="SUPFAM" id="SSF54821">
    <property type="entry name" value="Ribosomal protein S3 C-terminal domain"/>
    <property type="match status" value="1"/>
</dbReference>
<dbReference type="PROSITE" id="PS50823">
    <property type="entry name" value="KH_TYPE_2"/>
    <property type="match status" value="1"/>
</dbReference>
<dbReference type="PROSITE" id="PS00548">
    <property type="entry name" value="RIBOSOMAL_S3"/>
    <property type="match status" value="1"/>
</dbReference>
<protein>
    <recommendedName>
        <fullName evidence="1">Small ribosomal subunit protein uS3</fullName>
    </recommendedName>
    <alternativeName>
        <fullName evidence="2">30S ribosomal protein S3</fullName>
    </alternativeName>
</protein>